<feature type="chain" id="PRO_1000187482" description="Chromosome partition protein MukB">
    <location>
        <begin position="1"/>
        <end position="1484"/>
    </location>
</feature>
<feature type="region of interest" description="Flexible hinge" evidence="1">
    <location>
        <begin position="666"/>
        <end position="783"/>
    </location>
</feature>
<feature type="region of interest" description="Disordered" evidence="2">
    <location>
        <begin position="1049"/>
        <end position="1074"/>
    </location>
</feature>
<feature type="coiled-coil region" evidence="1">
    <location>
        <begin position="326"/>
        <end position="418"/>
    </location>
</feature>
<feature type="coiled-coil region" evidence="1">
    <location>
        <begin position="444"/>
        <end position="472"/>
    </location>
</feature>
<feature type="coiled-coil region" evidence="1">
    <location>
        <begin position="509"/>
        <end position="602"/>
    </location>
</feature>
<feature type="coiled-coil region" evidence="1">
    <location>
        <begin position="835"/>
        <end position="923"/>
    </location>
</feature>
<feature type="coiled-coil region" evidence="1">
    <location>
        <begin position="977"/>
        <end position="1116"/>
    </location>
</feature>
<feature type="coiled-coil region" evidence="1">
    <location>
        <begin position="1209"/>
        <end position="1265"/>
    </location>
</feature>
<feature type="compositionally biased region" description="Basic and acidic residues" evidence="2">
    <location>
        <begin position="1051"/>
        <end position="1065"/>
    </location>
</feature>
<feature type="binding site" evidence="1">
    <location>
        <begin position="34"/>
        <end position="41"/>
    </location>
    <ligand>
        <name>ATP</name>
        <dbReference type="ChEBI" id="CHEBI:30616"/>
    </ligand>
</feature>
<reference key="1">
    <citation type="journal article" date="2011" name="J. Bacteriol.">
        <title>Comparative genomics of 28 Salmonella enterica isolates: evidence for CRISPR-mediated adaptive sublineage evolution.</title>
        <authorList>
            <person name="Fricke W.F."/>
            <person name="Mammel M.K."/>
            <person name="McDermott P.F."/>
            <person name="Tartera C."/>
            <person name="White D.G."/>
            <person name="Leclerc J.E."/>
            <person name="Ravel J."/>
            <person name="Cebula T.A."/>
        </authorList>
    </citation>
    <scope>NUCLEOTIDE SEQUENCE [LARGE SCALE GENOMIC DNA]</scope>
    <source>
        <strain>CT_02021853</strain>
    </source>
</reference>
<name>MUKB_SALDC</name>
<proteinExistence type="inferred from homology"/>
<keyword id="KW-0067">ATP-binding</keyword>
<keyword id="KW-0131">Cell cycle</keyword>
<keyword id="KW-0132">Cell division</keyword>
<keyword id="KW-0159">Chromosome partition</keyword>
<keyword id="KW-0175">Coiled coil</keyword>
<keyword id="KW-0963">Cytoplasm</keyword>
<keyword id="KW-0226">DNA condensation</keyword>
<keyword id="KW-0238">DNA-binding</keyword>
<keyword id="KW-0547">Nucleotide-binding</keyword>
<comment type="function">
    <text evidence="1">Plays a central role in chromosome condensation, segregation and cell cycle progression. Functions as a homodimer, which is essential for chromosome partition. Involved in negative DNA supercoiling in vivo, and by this means organize and compact chromosomes. May achieve or facilitate chromosome segregation by condensation DNA from both sides of a centrally located replisome during cell division.</text>
</comment>
<comment type="subunit">
    <text evidence="1">Homodimerization via its hinge domain. Binds to DNA via its C-terminal region. Interacts, and probably forms a ternary complex, with MukE and MukF via its C-terminal region. The complex formation is stimulated by calcium or magnesium. Interacts with tubulin-related protein FtsZ.</text>
</comment>
<comment type="subcellular location">
    <subcellularLocation>
        <location evidence="1">Cytoplasm</location>
        <location evidence="1">Nucleoid</location>
    </subcellularLocation>
    <text evidence="1">Restricted to the nucleoid region.</text>
</comment>
<comment type="domain">
    <text evidence="1">The hinge domain, which separates the large intramolecular coiled coil regions, allows the homodimerization, forming a V-shaped homodimer.</text>
</comment>
<comment type="similarity">
    <text evidence="1">Belongs to the SMC family. MukB subfamily.</text>
</comment>
<accession>B5FQ67</accession>
<organism>
    <name type="scientific">Salmonella dublin (strain CT_02021853)</name>
    <dbReference type="NCBI Taxonomy" id="439851"/>
    <lineage>
        <taxon>Bacteria</taxon>
        <taxon>Pseudomonadati</taxon>
        <taxon>Pseudomonadota</taxon>
        <taxon>Gammaproteobacteria</taxon>
        <taxon>Enterobacterales</taxon>
        <taxon>Enterobacteriaceae</taxon>
        <taxon>Salmonella</taxon>
    </lineage>
</organism>
<dbReference type="EMBL" id="CP001144">
    <property type="protein sequence ID" value="ACH75139.1"/>
    <property type="molecule type" value="Genomic_DNA"/>
</dbReference>
<dbReference type="RefSeq" id="WP_000572757.1">
    <property type="nucleotide sequence ID" value="NC_011205.1"/>
</dbReference>
<dbReference type="SMR" id="B5FQ67"/>
<dbReference type="KEGG" id="sed:SeD_A1059"/>
<dbReference type="HOGENOM" id="CLU_004430_0_0_6"/>
<dbReference type="Proteomes" id="UP000008322">
    <property type="component" value="Chromosome"/>
</dbReference>
<dbReference type="GO" id="GO:0005737">
    <property type="term" value="C:cytoplasm"/>
    <property type="evidence" value="ECO:0007669"/>
    <property type="project" value="UniProtKB-UniRule"/>
</dbReference>
<dbReference type="GO" id="GO:0009295">
    <property type="term" value="C:nucleoid"/>
    <property type="evidence" value="ECO:0007669"/>
    <property type="project" value="UniProtKB-SubCell"/>
</dbReference>
<dbReference type="GO" id="GO:0005524">
    <property type="term" value="F:ATP binding"/>
    <property type="evidence" value="ECO:0007669"/>
    <property type="project" value="UniProtKB-UniRule"/>
</dbReference>
<dbReference type="GO" id="GO:0003677">
    <property type="term" value="F:DNA binding"/>
    <property type="evidence" value="ECO:0007669"/>
    <property type="project" value="UniProtKB-UniRule"/>
</dbReference>
<dbReference type="GO" id="GO:0051301">
    <property type="term" value="P:cell division"/>
    <property type="evidence" value="ECO:0007669"/>
    <property type="project" value="UniProtKB-KW"/>
</dbReference>
<dbReference type="GO" id="GO:0030261">
    <property type="term" value="P:chromosome condensation"/>
    <property type="evidence" value="ECO:0007669"/>
    <property type="project" value="UniProtKB-KW"/>
</dbReference>
<dbReference type="GO" id="GO:0007059">
    <property type="term" value="P:chromosome segregation"/>
    <property type="evidence" value="ECO:0007669"/>
    <property type="project" value="UniProtKB-UniRule"/>
</dbReference>
<dbReference type="GO" id="GO:0006260">
    <property type="term" value="P:DNA replication"/>
    <property type="evidence" value="ECO:0007669"/>
    <property type="project" value="UniProtKB-UniRule"/>
</dbReference>
<dbReference type="FunFam" id="3.30.70.3500:FF:000001">
    <property type="entry name" value="Chromosome partition protein MukB"/>
    <property type="match status" value="1"/>
</dbReference>
<dbReference type="FunFam" id="3.40.1140.10:FF:000001">
    <property type="entry name" value="Chromosome partition protein MukB"/>
    <property type="match status" value="1"/>
</dbReference>
<dbReference type="FunFam" id="3.40.1140.10:FF:000002">
    <property type="entry name" value="Chromosome partition protein MukB"/>
    <property type="match status" value="1"/>
</dbReference>
<dbReference type="Gene3D" id="1.10.287.1490">
    <property type="match status" value="1"/>
</dbReference>
<dbReference type="Gene3D" id="1.20.58.850">
    <property type="match status" value="1"/>
</dbReference>
<dbReference type="Gene3D" id="3.40.1140.10">
    <property type="match status" value="2"/>
</dbReference>
<dbReference type="Gene3D" id="1.20.5.420">
    <property type="entry name" value="Immunoglobulin FC, subunit C"/>
    <property type="match status" value="1"/>
</dbReference>
<dbReference type="Gene3D" id="3.30.70.3500">
    <property type="entry name" value="MukB, hinge domain"/>
    <property type="match status" value="1"/>
</dbReference>
<dbReference type="HAMAP" id="MF_01800">
    <property type="entry name" value="MukB"/>
    <property type="match status" value="1"/>
</dbReference>
<dbReference type="InterPro" id="IPR012090">
    <property type="entry name" value="MukB"/>
</dbReference>
<dbReference type="InterPro" id="IPR050308">
    <property type="entry name" value="MukB/SMC"/>
</dbReference>
<dbReference type="InterPro" id="IPR032520">
    <property type="entry name" value="MukB_hinge"/>
</dbReference>
<dbReference type="InterPro" id="IPR042501">
    <property type="entry name" value="MukB_hinge_sf"/>
</dbReference>
<dbReference type="InterPro" id="IPR007406">
    <property type="entry name" value="MukB_N_dom"/>
</dbReference>
<dbReference type="InterPro" id="IPR027417">
    <property type="entry name" value="P-loop_NTPase"/>
</dbReference>
<dbReference type="NCBIfam" id="NF003422">
    <property type="entry name" value="PRK04863.1"/>
    <property type="match status" value="1"/>
</dbReference>
<dbReference type="PANTHER" id="PTHR42963">
    <property type="entry name" value="CHROMOSOME PARTITION PROTEIN MUKB"/>
    <property type="match status" value="1"/>
</dbReference>
<dbReference type="PANTHER" id="PTHR42963:SF1">
    <property type="entry name" value="DUF4476 DOMAIN-CONTAINING PROTEIN"/>
    <property type="match status" value="1"/>
</dbReference>
<dbReference type="Pfam" id="PF04310">
    <property type="entry name" value="MukB"/>
    <property type="match status" value="1"/>
</dbReference>
<dbReference type="Pfam" id="PF16330">
    <property type="entry name" value="MukB_hinge"/>
    <property type="match status" value="1"/>
</dbReference>
<dbReference type="Pfam" id="PF13558">
    <property type="entry name" value="SbcC_Walker_B"/>
    <property type="match status" value="1"/>
</dbReference>
<dbReference type="PIRSF" id="PIRSF005246">
    <property type="entry name" value="MukB"/>
    <property type="match status" value="1"/>
</dbReference>
<dbReference type="SUPFAM" id="SSF52540">
    <property type="entry name" value="P-loop containing nucleoside triphosphate hydrolases"/>
    <property type="match status" value="2"/>
</dbReference>
<sequence length="1484" mass="169647">MIERGKFRSLTLINWNGFFARTFDLDELVTTLSGGNGAGKSTTMAAFVTALIPDLTLLHFRNTTEAGATSGSRDKGLHGKLKAGVCYSMLDTINSRHQRVVVGVRLQQVAGRDRKVDIKPFAIQGLPMSVQPTQLVTETLNERQARVLSLAELKDKLDEMEGVQFKQFNSITDYHSLMFDLGIIARRLRSASDRSKFYRLIEASLYGGISSAITRSLRDYLLPENSGVRKAFQDMEAALRENRLTLEAIRVTQSDRDLFKHLISEATDYVAADYMRHTNERRVHLDQALAFRRELYTSRKQLAAEQYKHVDMARELGEHNGAEGSLEADYQAASDHLNLVQTALRQQEKIERYEADLEELQIRLEEQNEVVAEAAEMQDENEARAEAAELEVDELKSQLADYQQALDVQQTRAIQYNQAISALARAKELCHLPDLTPESAAEWLDTFQAKEQEATEKLLSLEQKMSVAQTAHSQFEQAYQLVAAINGPLARSEAWDVARELLRDGVNQRHLAEQVQPLRMRLSELEQRLREQQEAERLLAEFCKRQGKNFDIDELEALHQELEARIASLSESVSSASEQRMALRQEQEQLQSRIQHLMQRAPVWLAAQNSLNQLSEQCGEEFTSSQEVTEYLQQLLEREREAIVERDEVGARKNAVDEEIERLSQPGGAEDQRLNALAERFGGVLLSEIYDDVSLEDAPYFSALYGPSRHAIVVPDLSQIAEQLEGLTDCPEDLYLIEGDPQSFDDSVFSVDELEKAVVVKIADRQWRYSRFPSLPIFGRAARENRIESLHAEREVLSERFATLSFDVQKTQRLHQAFSRFIGSHLSVAFEDDPEAEIRRLNGRRVELERALATHESDNQQQRLQFEQAKEGVSALNRLLPRLNLLADETLADRVDEIQERLDEAQEAARFVQQYGNQLAKLEPVVSVLQSDPEQFEQLKEDYAWSQQMQRDARQQAFALAEVVERRAHFSYSDSAEMLSGNSDLNEKLRQRLEQAEAERTRAREALRSHAAQLSQYSQVLASLKSSYDTKKELLNDLQRELQDIGVRADSGAEERARQRRDELHAQLSNNRSRRNQLEKALTFCEAEMENLTRKLRKLERDYHEMREQVVTAKAGWCAVMRMVKDNGVERRLHRRELAYLSADELRSMSDKALGALRLAVADNEHLRDVLRLSEDPKRPERKIQFFVAVYQHLRERIRQDIIRTDDPVEAIEQMEIELSRLTEELTSREQKLAISSRSVANIIRKTIQREQNRIRMLNQGLQSVSFGQVNSVRLNVNVRETHATLLDVLSEQQEQHQDLFNSNRLTFSEALAKLYQRLNPQIDMGQRTPQTIGEELLDYRNYLEMEVEVNRGSDGWLRAESGALSTGEAIGTGMSILVMVVQSWEDEARRLRGKDISPCRLLFLDEAARLDARSIATLFELCERLQMQLIIAAPENISPEKGTTYKLVRKVFQNTEHVHVVGLRGFAPQLPGTQTEDTPSEAS</sequence>
<protein>
    <recommendedName>
        <fullName evidence="1">Chromosome partition protein MukB</fullName>
    </recommendedName>
    <alternativeName>
        <fullName evidence="1">Structural maintenance of chromosome-related protein</fullName>
    </alternativeName>
</protein>
<gene>
    <name evidence="1" type="primary">mukB</name>
    <name type="ordered locus">SeD_A1059</name>
</gene>
<evidence type="ECO:0000255" key="1">
    <source>
        <dbReference type="HAMAP-Rule" id="MF_01800"/>
    </source>
</evidence>
<evidence type="ECO:0000256" key="2">
    <source>
        <dbReference type="SAM" id="MobiDB-lite"/>
    </source>
</evidence>